<organism>
    <name type="scientific">Shigella dysenteriae serotype 1 (strain Sd197)</name>
    <dbReference type="NCBI Taxonomy" id="300267"/>
    <lineage>
        <taxon>Bacteria</taxon>
        <taxon>Pseudomonadati</taxon>
        <taxon>Pseudomonadota</taxon>
        <taxon>Gammaproteobacteria</taxon>
        <taxon>Enterobacterales</taxon>
        <taxon>Enterobacteriaceae</taxon>
        <taxon>Shigella</taxon>
    </lineage>
</organism>
<keyword id="KW-0997">Cell inner membrane</keyword>
<keyword id="KW-1003">Cell membrane</keyword>
<keyword id="KW-0418">Kinase</keyword>
<keyword id="KW-0472">Membrane</keyword>
<keyword id="KW-0598">Phosphotransferase system</keyword>
<keyword id="KW-1185">Reference proteome</keyword>
<keyword id="KW-0762">Sugar transport</keyword>
<keyword id="KW-0808">Transferase</keyword>
<keyword id="KW-0812">Transmembrane</keyword>
<keyword id="KW-1133">Transmembrane helix</keyword>
<keyword id="KW-0813">Transport</keyword>
<reference key="1">
    <citation type="journal article" date="2005" name="Nucleic Acids Res.">
        <title>Genome dynamics and diversity of Shigella species, the etiologic agents of bacillary dysentery.</title>
        <authorList>
            <person name="Yang F."/>
            <person name="Yang J."/>
            <person name="Zhang X."/>
            <person name="Chen L."/>
            <person name="Jiang Y."/>
            <person name="Yan Y."/>
            <person name="Tang X."/>
            <person name="Wang J."/>
            <person name="Xiong Z."/>
            <person name="Dong J."/>
            <person name="Xue Y."/>
            <person name="Zhu Y."/>
            <person name="Xu X."/>
            <person name="Sun L."/>
            <person name="Chen S."/>
            <person name="Nie H."/>
            <person name="Peng J."/>
            <person name="Xu J."/>
            <person name="Wang Y."/>
            <person name="Yuan Z."/>
            <person name="Wen Y."/>
            <person name="Yao Z."/>
            <person name="Shen Y."/>
            <person name="Qiang B."/>
            <person name="Hou Y."/>
            <person name="Yu J."/>
            <person name="Jin Q."/>
        </authorList>
    </citation>
    <scope>NUCLEOTIDE SEQUENCE [LARGE SCALE GENOMIC DNA]</scope>
    <source>
        <strain>Sd197</strain>
    </source>
</reference>
<sequence length="474" mass="49812">MAKEISSELLNTILTRVGGPGNIASCGNCMTRLRLGVHDSSLVDPNIKTLEGVKGVILTSDQVQVVFGPGKAHRATKAMSELLGEAPVQDAAEIAAQNKRQLKAKQTSGVQQFLAKFATIFTPLIPGFIAAGLLLGIATLIATVMHVPADAQGTLPDALNFMKVFSKGLFTFLVILVGYNAAQAFGGTGVNGAIIAALFLLGYNPAATTGYYAGFHDFFGLPIDPRGNIIGVLIAAWACARIEGMVRRFMPDDLDMLLTSLITLLITATLAYLIIMPLGGWLFEGMSWLFMHLNSNPLGCAVLAGLFLIAVVFGVHQGFIPVYLALMDSQGFNSLFPILSMAGAGQVGAALALYWRAQPHSGLRSQVRGAIIPGLLGVGEPLIYGVTLPRMKPFITACLGGAAGGLFIGLIAWWGLPMGLNSAFGPSGLVALPLMTSAQGILPAMAIYAGGILVAWVCGFIFTTLFGCRNVNLD</sequence>
<dbReference type="EC" id="2.7.1.192" evidence="1"/>
<dbReference type="EMBL" id="CP000034">
    <property type="protein sequence ID" value="ABB62680.1"/>
    <property type="molecule type" value="Genomic_DNA"/>
</dbReference>
<dbReference type="RefSeq" id="WP_001040498.1">
    <property type="nucleotide sequence ID" value="NC_007606.1"/>
</dbReference>
<dbReference type="RefSeq" id="YP_404171.1">
    <property type="nucleotide sequence ID" value="NC_007606.1"/>
</dbReference>
<dbReference type="SMR" id="Q32DC5"/>
<dbReference type="STRING" id="300267.SDY_2625"/>
<dbReference type="EnsemblBacteria" id="ABB62680">
    <property type="protein sequence ID" value="ABB62680"/>
    <property type="gene ID" value="SDY_2625"/>
</dbReference>
<dbReference type="KEGG" id="sdy:SDY_2625"/>
<dbReference type="PATRIC" id="fig|300267.13.peg.3162"/>
<dbReference type="HOGENOM" id="CLU_012312_2_0_6"/>
<dbReference type="Proteomes" id="UP000002716">
    <property type="component" value="Chromosome"/>
</dbReference>
<dbReference type="GO" id="GO:0005886">
    <property type="term" value="C:plasma membrane"/>
    <property type="evidence" value="ECO:0007669"/>
    <property type="project" value="UniProtKB-SubCell"/>
</dbReference>
<dbReference type="GO" id="GO:0016301">
    <property type="term" value="F:kinase activity"/>
    <property type="evidence" value="ECO:0007669"/>
    <property type="project" value="UniProtKB-KW"/>
</dbReference>
<dbReference type="GO" id="GO:0008982">
    <property type="term" value="F:protein-N(PI)-phosphohistidine-sugar phosphotransferase activity"/>
    <property type="evidence" value="ECO:0007669"/>
    <property type="project" value="InterPro"/>
</dbReference>
<dbReference type="GO" id="GO:0090588">
    <property type="term" value="F:protein-phosphocysteine-N-acetylmuramate phosphotransferase system transporter activity"/>
    <property type="evidence" value="ECO:0007669"/>
    <property type="project" value="TreeGrafter"/>
</dbReference>
<dbReference type="GO" id="GO:0009401">
    <property type="term" value="P:phosphoenolpyruvate-dependent sugar phosphotransferase system"/>
    <property type="evidence" value="ECO:0007669"/>
    <property type="project" value="UniProtKB-KW"/>
</dbReference>
<dbReference type="CDD" id="cd00212">
    <property type="entry name" value="PTS_IIB_glc"/>
    <property type="match status" value="1"/>
</dbReference>
<dbReference type="FunFam" id="3.30.1360.60:FF:000001">
    <property type="entry name" value="PTS system glucose-specific IIBC component PtsG"/>
    <property type="match status" value="1"/>
</dbReference>
<dbReference type="Gene3D" id="3.30.1360.60">
    <property type="entry name" value="Glucose permease domain IIB"/>
    <property type="match status" value="1"/>
</dbReference>
<dbReference type="InterPro" id="IPR036878">
    <property type="entry name" value="Glu_permease_IIB"/>
</dbReference>
<dbReference type="InterPro" id="IPR018113">
    <property type="entry name" value="PTrfase_EIIB_Cys"/>
</dbReference>
<dbReference type="InterPro" id="IPR003352">
    <property type="entry name" value="PTS_EIIC"/>
</dbReference>
<dbReference type="InterPro" id="IPR013013">
    <property type="entry name" value="PTS_EIIC_1"/>
</dbReference>
<dbReference type="InterPro" id="IPR001996">
    <property type="entry name" value="PTS_IIB_1"/>
</dbReference>
<dbReference type="InterPro" id="IPR050558">
    <property type="entry name" value="PTS_Sugar-Specific_Components"/>
</dbReference>
<dbReference type="NCBIfam" id="NF007152">
    <property type="entry name" value="PRK09586.1"/>
    <property type="match status" value="1"/>
</dbReference>
<dbReference type="PANTHER" id="PTHR30175">
    <property type="entry name" value="PHOSPHOTRANSFERASE SYSTEM TRANSPORT PROTEIN"/>
    <property type="match status" value="1"/>
</dbReference>
<dbReference type="PANTHER" id="PTHR30175:SF3">
    <property type="entry name" value="PTS SYSTEM N-ACETYLMURAMIC ACID-SPECIFIC EIIBC COMPONENT"/>
    <property type="match status" value="1"/>
</dbReference>
<dbReference type="Pfam" id="PF00367">
    <property type="entry name" value="PTS_EIIB"/>
    <property type="match status" value="1"/>
</dbReference>
<dbReference type="Pfam" id="PF02378">
    <property type="entry name" value="PTS_EIIC"/>
    <property type="match status" value="1"/>
</dbReference>
<dbReference type="SUPFAM" id="SSF55604">
    <property type="entry name" value="Glucose permease domain IIB"/>
    <property type="match status" value="1"/>
</dbReference>
<dbReference type="PROSITE" id="PS51098">
    <property type="entry name" value="PTS_EIIB_TYPE_1"/>
    <property type="match status" value="1"/>
</dbReference>
<dbReference type="PROSITE" id="PS01035">
    <property type="entry name" value="PTS_EIIB_TYPE_1_CYS"/>
    <property type="match status" value="1"/>
</dbReference>
<dbReference type="PROSITE" id="PS51103">
    <property type="entry name" value="PTS_EIIC_TYPE_1"/>
    <property type="match status" value="1"/>
</dbReference>
<evidence type="ECO:0000250" key="1">
    <source>
        <dbReference type="UniProtKB" id="P77272"/>
    </source>
</evidence>
<evidence type="ECO:0000255" key="2"/>
<evidence type="ECO:0000255" key="3">
    <source>
        <dbReference type="PROSITE-ProRule" id="PRU00421"/>
    </source>
</evidence>
<evidence type="ECO:0000255" key="4">
    <source>
        <dbReference type="PROSITE-ProRule" id="PRU00426"/>
    </source>
</evidence>
<proteinExistence type="inferred from homology"/>
<accession>Q32DC5</accession>
<name>PTYBC_SHIDS</name>
<feature type="chain" id="PRO_0000248959" description="PTS system N-acetylmuramic acid-specific EIIBC component">
    <location>
        <begin position="1"/>
        <end position="474"/>
    </location>
</feature>
<feature type="topological domain" description="Cytoplasmic" evidence="2">
    <location>
        <begin position="1"/>
        <end position="123"/>
    </location>
</feature>
<feature type="transmembrane region" description="Helical" evidence="4">
    <location>
        <begin position="124"/>
        <end position="144"/>
    </location>
</feature>
<feature type="topological domain" description="Periplasmic" evidence="2">
    <location>
        <begin position="145"/>
        <end position="157"/>
    </location>
</feature>
<feature type="transmembrane region" description="Helical" evidence="4">
    <location>
        <begin position="158"/>
        <end position="178"/>
    </location>
</feature>
<feature type="topological domain" description="Cytoplasmic" evidence="2">
    <location>
        <begin position="179"/>
        <end position="180"/>
    </location>
</feature>
<feature type="transmembrane region" description="Helical" evidence="4">
    <location>
        <begin position="181"/>
        <end position="201"/>
    </location>
</feature>
<feature type="topological domain" description="Periplasmic" evidence="2">
    <location>
        <begin position="202"/>
        <end position="217"/>
    </location>
</feature>
<feature type="transmembrane region" description="Helical" evidence="4">
    <location>
        <begin position="218"/>
        <end position="238"/>
    </location>
</feature>
<feature type="topological domain" description="Cytoplasmic" evidence="2">
    <location>
        <begin position="239"/>
        <end position="260"/>
    </location>
</feature>
<feature type="transmembrane region" description="Helical" evidence="4">
    <location>
        <begin position="261"/>
        <end position="281"/>
    </location>
</feature>
<feature type="topological domain" description="Periplasmic" evidence="2">
    <location>
        <begin position="282"/>
        <end position="301"/>
    </location>
</feature>
<feature type="transmembrane region" description="Helical" evidence="4">
    <location>
        <begin position="302"/>
        <end position="322"/>
    </location>
</feature>
<feature type="topological domain" description="Cytoplasmic" evidence="2">
    <location>
        <begin position="323"/>
        <end position="334"/>
    </location>
</feature>
<feature type="transmembrane region" description="Helical" evidence="4">
    <location>
        <begin position="335"/>
        <end position="355"/>
    </location>
</feature>
<feature type="topological domain" description="Periplasmic" evidence="2">
    <location>
        <begin position="356"/>
        <end position="368"/>
    </location>
</feature>
<feature type="transmembrane region" description="Helical" evidence="4">
    <location>
        <begin position="369"/>
        <end position="389"/>
    </location>
</feature>
<feature type="topological domain" description="Cytoplasmic" evidence="2">
    <location>
        <begin position="390"/>
        <end position="393"/>
    </location>
</feature>
<feature type="transmembrane region" description="Helical" evidence="4">
    <location>
        <begin position="394"/>
        <end position="414"/>
    </location>
</feature>
<feature type="topological domain" description="Periplasmic" evidence="2">
    <location>
        <begin position="415"/>
        <end position="440"/>
    </location>
</feature>
<feature type="transmembrane region" description="Helical" evidence="4">
    <location>
        <begin position="441"/>
        <end position="461"/>
    </location>
</feature>
<feature type="topological domain" description="Cytoplasmic" evidence="2">
    <location>
        <begin position="462"/>
        <end position="474"/>
    </location>
</feature>
<feature type="domain" description="PTS EIIB type-1" evidence="3">
    <location>
        <begin position="1"/>
        <end position="89"/>
    </location>
</feature>
<feature type="domain" description="PTS EIIC type-1" evidence="4">
    <location>
        <begin position="115"/>
        <end position="474"/>
    </location>
</feature>
<feature type="active site" description="Phosphocysteine intermediate; for EIIB activity" evidence="3">
    <location>
        <position position="29"/>
    </location>
</feature>
<gene>
    <name type="primary">murP</name>
    <name type="ordered locus">SDY_2625</name>
</gene>
<protein>
    <recommendedName>
        <fullName evidence="1">PTS system N-acetylmuramic acid-specific EIIBC component</fullName>
    </recommendedName>
    <alternativeName>
        <fullName evidence="1">EIIBC-MurNAc</fullName>
    </alternativeName>
    <domain>
        <recommendedName>
            <fullName evidence="1">N-acetylmuramic acid-specific phosphotransferase enzyme IIB component</fullName>
            <ecNumber evidence="1">2.7.1.192</ecNumber>
        </recommendedName>
        <alternativeName>
            <fullName evidence="1">PTS system N-acetylmuramic acid-specific EIIB component</fullName>
        </alternativeName>
    </domain>
    <domain>
        <recommendedName>
            <fullName evidence="1">N-acetylmuramic acid permease IIC component</fullName>
        </recommendedName>
        <alternativeName>
            <fullName evidence="1">PTS system N-acetylmuramic acid-specific EIIC component</fullName>
        </alternativeName>
    </domain>
</protein>
<comment type="function">
    <text evidence="1">The phosphoenolpyruvate-dependent sugar phosphotransferase system (sugar PTS), a major carbohydrate active transport system, catalyzes the phosphorylation of incoming sugar substrates concomitantly with their translocation across the cell membrane. This system is involved in N-acetylmuramic acid (MurNAc) transport, yielding cytoplasmic MurNAc-6-P. Is also able to take up anhydro-N-acetylmuramic acid (anhMurNAc), but cannot phosphorylate the carbon 6, probably because of the 1,6-anhydro ring.</text>
</comment>
<comment type="catalytic activity">
    <reaction evidence="1">
        <text>N-acetyl-beta-D-muramate(out) + N(pros)-phospho-L-histidyl-[protein] = N-acetyl-beta-D-muramate 6-phosphate(in) + L-histidyl-[protein]</text>
        <dbReference type="Rhea" id="RHEA:33399"/>
        <dbReference type="Rhea" id="RHEA-COMP:9745"/>
        <dbReference type="Rhea" id="RHEA-COMP:9746"/>
        <dbReference type="ChEBI" id="CHEBI:29979"/>
        <dbReference type="ChEBI" id="CHEBI:58721"/>
        <dbReference type="ChEBI" id="CHEBI:64837"/>
        <dbReference type="ChEBI" id="CHEBI:64848"/>
        <dbReference type="EC" id="2.7.1.192"/>
    </reaction>
</comment>
<comment type="subcellular location">
    <subcellularLocation>
        <location evidence="4">Cell inner membrane</location>
        <topology evidence="4">Multi-pass membrane protein</topology>
    </subcellularLocation>
</comment>
<comment type="domain">
    <text evidence="3">The EIIB domain is phosphorylated by phospho-EIIA on a cysteinyl or histidyl residue, depending on the transported sugar. Then, it transfers the phosphoryl group to the sugar substrate concomitantly with the sugar uptake processed by the EIIC domain.</text>
</comment>
<comment type="domain">
    <text evidence="4">The EIIC domain forms the PTS system translocation channel and contains the specific substrate-binding site.</text>
</comment>